<keyword id="KW-0004">4Fe-4S</keyword>
<keyword id="KW-0408">Iron</keyword>
<keyword id="KW-0411">Iron-sulfur</keyword>
<keyword id="KW-0414">Isoprene biosynthesis</keyword>
<keyword id="KW-0479">Metal-binding</keyword>
<keyword id="KW-0560">Oxidoreductase</keyword>
<proteinExistence type="inferred from homology"/>
<name>ISPG_PSEP7</name>
<accession>A6V0W0</accession>
<reference key="1">
    <citation type="submission" date="2007-06" db="EMBL/GenBank/DDBJ databases">
        <authorList>
            <person name="Dodson R.J."/>
            <person name="Harkins D."/>
            <person name="Paulsen I.T."/>
        </authorList>
    </citation>
    <scope>NUCLEOTIDE SEQUENCE [LARGE SCALE GENOMIC DNA]</scope>
    <source>
        <strain>DSM 24068 / PA7</strain>
    </source>
</reference>
<feature type="chain" id="PRO_1000011496" description="4-hydroxy-3-methylbut-2-en-1-yl diphosphate synthase (flavodoxin)">
    <location>
        <begin position="1"/>
        <end position="371"/>
    </location>
</feature>
<feature type="binding site" evidence="1">
    <location>
        <position position="272"/>
    </location>
    <ligand>
        <name>[4Fe-4S] cluster</name>
        <dbReference type="ChEBI" id="CHEBI:49883"/>
    </ligand>
</feature>
<feature type="binding site" evidence="1">
    <location>
        <position position="275"/>
    </location>
    <ligand>
        <name>[4Fe-4S] cluster</name>
        <dbReference type="ChEBI" id="CHEBI:49883"/>
    </ligand>
</feature>
<feature type="binding site" evidence="1">
    <location>
        <position position="307"/>
    </location>
    <ligand>
        <name>[4Fe-4S] cluster</name>
        <dbReference type="ChEBI" id="CHEBI:49883"/>
    </ligand>
</feature>
<feature type="binding site" evidence="1">
    <location>
        <position position="314"/>
    </location>
    <ligand>
        <name>[4Fe-4S] cluster</name>
        <dbReference type="ChEBI" id="CHEBI:49883"/>
    </ligand>
</feature>
<sequence>MSIHSASPITRRKSRKIWVGNVPVGGDAPIAVQSMTNTETCDVAATVAQIRRLEDAGADIVRVSVPDMDAAEAFGKIKQQVNVPLVADIHFDYRIALRVAELGVDCLRINPGNIGREDRVKAVVDAARERNIPIRIGVNAGSLEKDLQKKYGEPTPEALLESAMRHVDHLDKLDFQNFKVSVKASDVFMAVAAYRLLARQIEQPLHLGITEAGGLRSGTVKSAVGLGMLLAEGIGDTIRISLAADPVEEIKVGFDILKSLHLRSRGINFIACPSCSRQNFDVVKTMNELEGRLEDLLVPMDVAVIGCVVNGPGEAKEAHVGLTGGTPNLVYIDGKPSQKLTNDNLVDELERLIRQKAAEKAEADASLIARG</sequence>
<comment type="function">
    <text evidence="1">Converts 2C-methyl-D-erythritol 2,4-cyclodiphosphate (ME-2,4cPP) into 1-hydroxy-2-methyl-2-(E)-butenyl 4-diphosphate.</text>
</comment>
<comment type="catalytic activity">
    <reaction evidence="1">
        <text>(2E)-4-hydroxy-3-methylbut-2-enyl diphosphate + oxidized [flavodoxin] + H2O + 2 H(+) = 2-C-methyl-D-erythritol 2,4-cyclic diphosphate + reduced [flavodoxin]</text>
        <dbReference type="Rhea" id="RHEA:43604"/>
        <dbReference type="Rhea" id="RHEA-COMP:10622"/>
        <dbReference type="Rhea" id="RHEA-COMP:10623"/>
        <dbReference type="ChEBI" id="CHEBI:15377"/>
        <dbReference type="ChEBI" id="CHEBI:15378"/>
        <dbReference type="ChEBI" id="CHEBI:57618"/>
        <dbReference type="ChEBI" id="CHEBI:58210"/>
        <dbReference type="ChEBI" id="CHEBI:58483"/>
        <dbReference type="ChEBI" id="CHEBI:128753"/>
        <dbReference type="EC" id="1.17.7.3"/>
    </reaction>
</comment>
<comment type="cofactor">
    <cofactor evidence="1">
        <name>[4Fe-4S] cluster</name>
        <dbReference type="ChEBI" id="CHEBI:49883"/>
    </cofactor>
    <text evidence="1">Binds 1 [4Fe-4S] cluster.</text>
</comment>
<comment type="pathway">
    <text evidence="1">Isoprenoid biosynthesis; isopentenyl diphosphate biosynthesis via DXP pathway; isopentenyl diphosphate from 1-deoxy-D-xylulose 5-phosphate: step 5/6.</text>
</comment>
<comment type="similarity">
    <text evidence="1">Belongs to the IspG family.</text>
</comment>
<dbReference type="EC" id="1.17.7.3" evidence="1"/>
<dbReference type="EMBL" id="CP000744">
    <property type="protein sequence ID" value="ABR83337.1"/>
    <property type="molecule type" value="Genomic_DNA"/>
</dbReference>
<dbReference type="RefSeq" id="WP_012074562.1">
    <property type="nucleotide sequence ID" value="NC_009656.1"/>
</dbReference>
<dbReference type="SMR" id="A6V0W0"/>
<dbReference type="GeneID" id="77219701"/>
<dbReference type="KEGG" id="pap:PSPA7_1311"/>
<dbReference type="HOGENOM" id="CLU_042258_0_0_6"/>
<dbReference type="UniPathway" id="UPA00056">
    <property type="reaction ID" value="UER00096"/>
</dbReference>
<dbReference type="Proteomes" id="UP000001582">
    <property type="component" value="Chromosome"/>
</dbReference>
<dbReference type="GO" id="GO:0051539">
    <property type="term" value="F:4 iron, 4 sulfur cluster binding"/>
    <property type="evidence" value="ECO:0007669"/>
    <property type="project" value="UniProtKB-UniRule"/>
</dbReference>
<dbReference type="GO" id="GO:0046429">
    <property type="term" value="F:4-hydroxy-3-methylbut-2-en-1-yl diphosphate synthase activity (ferredoxin)"/>
    <property type="evidence" value="ECO:0007669"/>
    <property type="project" value="UniProtKB-UniRule"/>
</dbReference>
<dbReference type="GO" id="GO:0141197">
    <property type="term" value="F:4-hydroxy-3-methylbut-2-enyl-diphosphate synthase activity (flavodoxin)"/>
    <property type="evidence" value="ECO:0007669"/>
    <property type="project" value="UniProtKB-EC"/>
</dbReference>
<dbReference type="GO" id="GO:0005506">
    <property type="term" value="F:iron ion binding"/>
    <property type="evidence" value="ECO:0007669"/>
    <property type="project" value="InterPro"/>
</dbReference>
<dbReference type="GO" id="GO:0019288">
    <property type="term" value="P:isopentenyl diphosphate biosynthetic process, methylerythritol 4-phosphate pathway"/>
    <property type="evidence" value="ECO:0007669"/>
    <property type="project" value="UniProtKB-UniRule"/>
</dbReference>
<dbReference type="GO" id="GO:0016114">
    <property type="term" value="P:terpenoid biosynthetic process"/>
    <property type="evidence" value="ECO:0007669"/>
    <property type="project" value="InterPro"/>
</dbReference>
<dbReference type="FunFam" id="3.20.20.20:FF:000001">
    <property type="entry name" value="4-hydroxy-3-methylbut-2-en-1-yl diphosphate synthase (flavodoxin)"/>
    <property type="match status" value="1"/>
</dbReference>
<dbReference type="Gene3D" id="3.20.20.20">
    <property type="entry name" value="Dihydropteroate synthase-like"/>
    <property type="match status" value="1"/>
</dbReference>
<dbReference type="Gene3D" id="3.30.413.10">
    <property type="entry name" value="Sulfite Reductase Hemoprotein, domain 1"/>
    <property type="match status" value="1"/>
</dbReference>
<dbReference type="HAMAP" id="MF_00159">
    <property type="entry name" value="IspG"/>
    <property type="match status" value="1"/>
</dbReference>
<dbReference type="InterPro" id="IPR011005">
    <property type="entry name" value="Dihydropteroate_synth-like_sf"/>
</dbReference>
<dbReference type="InterPro" id="IPR016425">
    <property type="entry name" value="IspG_bac"/>
</dbReference>
<dbReference type="InterPro" id="IPR004588">
    <property type="entry name" value="IspG_bac-typ"/>
</dbReference>
<dbReference type="InterPro" id="IPR045854">
    <property type="entry name" value="NO2/SO3_Rdtase_4Fe4S_sf"/>
</dbReference>
<dbReference type="NCBIfam" id="TIGR00612">
    <property type="entry name" value="ispG_gcpE"/>
    <property type="match status" value="1"/>
</dbReference>
<dbReference type="NCBIfam" id="NF001540">
    <property type="entry name" value="PRK00366.1"/>
    <property type="match status" value="1"/>
</dbReference>
<dbReference type="PANTHER" id="PTHR30454">
    <property type="entry name" value="4-HYDROXY-3-METHYLBUT-2-EN-1-YL DIPHOSPHATE SYNTHASE"/>
    <property type="match status" value="1"/>
</dbReference>
<dbReference type="PANTHER" id="PTHR30454:SF0">
    <property type="entry name" value="4-HYDROXY-3-METHYLBUT-2-EN-1-YL DIPHOSPHATE SYNTHASE (FERREDOXIN), CHLOROPLASTIC"/>
    <property type="match status" value="1"/>
</dbReference>
<dbReference type="Pfam" id="PF04551">
    <property type="entry name" value="GcpE"/>
    <property type="match status" value="1"/>
</dbReference>
<dbReference type="PIRSF" id="PIRSF004640">
    <property type="entry name" value="IspG"/>
    <property type="match status" value="1"/>
</dbReference>
<dbReference type="SUPFAM" id="SSF51717">
    <property type="entry name" value="Dihydropteroate synthetase-like"/>
    <property type="match status" value="1"/>
</dbReference>
<dbReference type="SUPFAM" id="SSF56014">
    <property type="entry name" value="Nitrite and sulphite reductase 4Fe-4S domain-like"/>
    <property type="match status" value="1"/>
</dbReference>
<evidence type="ECO:0000255" key="1">
    <source>
        <dbReference type="HAMAP-Rule" id="MF_00159"/>
    </source>
</evidence>
<gene>
    <name evidence="1" type="primary">ispG</name>
    <name type="ordered locus">PSPA7_1311</name>
</gene>
<protein>
    <recommendedName>
        <fullName evidence="1">4-hydroxy-3-methylbut-2-en-1-yl diphosphate synthase (flavodoxin)</fullName>
        <ecNumber evidence="1">1.17.7.3</ecNumber>
    </recommendedName>
    <alternativeName>
        <fullName evidence="1">1-hydroxy-2-methyl-2-(E)-butenyl 4-diphosphate synthase</fullName>
    </alternativeName>
</protein>
<organism>
    <name type="scientific">Pseudomonas paraeruginosa (strain DSM 24068 / PA7)</name>
    <name type="common">Pseudomonas aeruginosa (strain PA7)</name>
    <dbReference type="NCBI Taxonomy" id="381754"/>
    <lineage>
        <taxon>Bacteria</taxon>
        <taxon>Pseudomonadati</taxon>
        <taxon>Pseudomonadota</taxon>
        <taxon>Gammaproteobacteria</taxon>
        <taxon>Pseudomonadales</taxon>
        <taxon>Pseudomonadaceae</taxon>
        <taxon>Pseudomonas</taxon>
        <taxon>Pseudomonas paraeruginosa</taxon>
    </lineage>
</organism>